<dbReference type="EC" id="5.2.1.8" evidence="1"/>
<dbReference type="EMBL" id="BA000031">
    <property type="protein sequence ID" value="BAC58601.1"/>
    <property type="molecule type" value="Genomic_DNA"/>
</dbReference>
<dbReference type="RefSeq" id="NP_796717.1">
    <property type="nucleotide sequence ID" value="NC_004603.1"/>
</dbReference>
<dbReference type="RefSeq" id="WP_005459625.1">
    <property type="nucleotide sequence ID" value="NC_004603.1"/>
</dbReference>
<dbReference type="SMR" id="Q87ST4"/>
<dbReference type="GeneID" id="1187805"/>
<dbReference type="KEGG" id="vpa:VP0338"/>
<dbReference type="PATRIC" id="fig|223926.6.peg.325"/>
<dbReference type="eggNOG" id="COG0760">
    <property type="taxonomic scope" value="Bacteria"/>
</dbReference>
<dbReference type="HOGENOM" id="CLU_034646_11_0_6"/>
<dbReference type="Proteomes" id="UP000002493">
    <property type="component" value="Chromosome 1"/>
</dbReference>
<dbReference type="GO" id="GO:0030288">
    <property type="term" value="C:outer membrane-bounded periplasmic space"/>
    <property type="evidence" value="ECO:0007669"/>
    <property type="project" value="InterPro"/>
</dbReference>
<dbReference type="GO" id="GO:0042277">
    <property type="term" value="F:peptide binding"/>
    <property type="evidence" value="ECO:0007669"/>
    <property type="project" value="InterPro"/>
</dbReference>
<dbReference type="GO" id="GO:0003755">
    <property type="term" value="F:peptidyl-prolyl cis-trans isomerase activity"/>
    <property type="evidence" value="ECO:0007669"/>
    <property type="project" value="UniProtKB-UniRule"/>
</dbReference>
<dbReference type="GO" id="GO:0051082">
    <property type="term" value="F:unfolded protein binding"/>
    <property type="evidence" value="ECO:0007669"/>
    <property type="project" value="UniProtKB-UniRule"/>
</dbReference>
<dbReference type="GO" id="GO:0043165">
    <property type="term" value="P:Gram-negative-bacterium-type cell outer membrane assembly"/>
    <property type="evidence" value="ECO:0007669"/>
    <property type="project" value="InterPro"/>
</dbReference>
<dbReference type="GO" id="GO:0006457">
    <property type="term" value="P:protein folding"/>
    <property type="evidence" value="ECO:0007669"/>
    <property type="project" value="UniProtKB-UniRule"/>
</dbReference>
<dbReference type="GO" id="GO:0050821">
    <property type="term" value="P:protein stabilization"/>
    <property type="evidence" value="ECO:0007669"/>
    <property type="project" value="InterPro"/>
</dbReference>
<dbReference type="Gene3D" id="3.10.50.40">
    <property type="match status" value="2"/>
</dbReference>
<dbReference type="Gene3D" id="1.10.4030.10">
    <property type="entry name" value="Porin chaperone SurA, peptide-binding domain"/>
    <property type="match status" value="2"/>
</dbReference>
<dbReference type="HAMAP" id="MF_01183">
    <property type="entry name" value="Chaperone_SurA"/>
    <property type="match status" value="1"/>
</dbReference>
<dbReference type="InterPro" id="IPR050280">
    <property type="entry name" value="OMP_Chaperone_SurA"/>
</dbReference>
<dbReference type="InterPro" id="IPR046357">
    <property type="entry name" value="PPIase_dom_sf"/>
</dbReference>
<dbReference type="InterPro" id="IPR000297">
    <property type="entry name" value="PPIase_PpiC"/>
</dbReference>
<dbReference type="InterPro" id="IPR023034">
    <property type="entry name" value="PPIase_SurA"/>
</dbReference>
<dbReference type="InterPro" id="IPR015391">
    <property type="entry name" value="SurA_N"/>
</dbReference>
<dbReference type="InterPro" id="IPR027304">
    <property type="entry name" value="Trigger_fact/SurA_dom_sf"/>
</dbReference>
<dbReference type="NCBIfam" id="NF008038">
    <property type="entry name" value="PRK10770.1"/>
    <property type="match status" value="1"/>
</dbReference>
<dbReference type="PANTHER" id="PTHR47637">
    <property type="entry name" value="CHAPERONE SURA"/>
    <property type="match status" value="1"/>
</dbReference>
<dbReference type="PANTHER" id="PTHR47637:SF1">
    <property type="entry name" value="CHAPERONE SURA"/>
    <property type="match status" value="1"/>
</dbReference>
<dbReference type="Pfam" id="PF13616">
    <property type="entry name" value="Rotamase_3"/>
    <property type="match status" value="2"/>
</dbReference>
<dbReference type="Pfam" id="PF09312">
    <property type="entry name" value="SurA_N"/>
    <property type="match status" value="1"/>
</dbReference>
<dbReference type="SUPFAM" id="SSF54534">
    <property type="entry name" value="FKBP-like"/>
    <property type="match status" value="2"/>
</dbReference>
<dbReference type="SUPFAM" id="SSF109998">
    <property type="entry name" value="Triger factor/SurA peptide-binding domain-like"/>
    <property type="match status" value="1"/>
</dbReference>
<dbReference type="PROSITE" id="PS50198">
    <property type="entry name" value="PPIC_PPIASE_2"/>
    <property type="match status" value="2"/>
</dbReference>
<feature type="signal peptide" evidence="1">
    <location>
        <begin position="1"/>
        <end position="19"/>
    </location>
</feature>
<feature type="chain" id="PRO_0000270045" description="Chaperone SurA">
    <location>
        <begin position="20"/>
        <end position="427"/>
    </location>
</feature>
<feature type="domain" description="PpiC 1" evidence="1">
    <location>
        <begin position="170"/>
        <end position="268"/>
    </location>
</feature>
<feature type="domain" description="PpiC 2" evidence="1">
    <location>
        <begin position="277"/>
        <end position="377"/>
    </location>
</feature>
<keyword id="KW-0143">Chaperone</keyword>
<keyword id="KW-0413">Isomerase</keyword>
<keyword id="KW-0574">Periplasm</keyword>
<keyword id="KW-0677">Repeat</keyword>
<keyword id="KW-0697">Rotamase</keyword>
<keyword id="KW-0732">Signal</keyword>
<protein>
    <recommendedName>
        <fullName evidence="1">Chaperone SurA</fullName>
    </recommendedName>
    <alternativeName>
        <fullName evidence="1">Peptidyl-prolyl cis-trans isomerase SurA</fullName>
        <shortName evidence="1">PPIase SurA</shortName>
        <ecNumber evidence="1">5.2.1.8</ecNumber>
    </alternativeName>
    <alternativeName>
        <fullName evidence="1">Rotamase SurA</fullName>
    </alternativeName>
</protein>
<accession>Q87ST4</accession>
<name>SURA_VIBPA</name>
<proteinExistence type="inferred from homology"/>
<evidence type="ECO:0000255" key="1">
    <source>
        <dbReference type="HAMAP-Rule" id="MF_01183"/>
    </source>
</evidence>
<organism>
    <name type="scientific">Vibrio parahaemolyticus serotype O3:K6 (strain RIMD 2210633)</name>
    <dbReference type="NCBI Taxonomy" id="223926"/>
    <lineage>
        <taxon>Bacteria</taxon>
        <taxon>Pseudomonadati</taxon>
        <taxon>Pseudomonadota</taxon>
        <taxon>Gammaproteobacteria</taxon>
        <taxon>Vibrionales</taxon>
        <taxon>Vibrionaceae</taxon>
        <taxon>Vibrio</taxon>
    </lineage>
</organism>
<comment type="function">
    <text evidence="1">Chaperone involved in the correct folding and assembly of outer membrane proteins. Recognizes specific patterns of aromatic residues and the orientation of their side chains, which are found more frequently in integral outer membrane proteins. May act in both early periplasmic and late outer membrane-associated steps of protein maturation.</text>
</comment>
<comment type="catalytic activity">
    <reaction evidence="1">
        <text>[protein]-peptidylproline (omega=180) = [protein]-peptidylproline (omega=0)</text>
        <dbReference type="Rhea" id="RHEA:16237"/>
        <dbReference type="Rhea" id="RHEA-COMP:10747"/>
        <dbReference type="Rhea" id="RHEA-COMP:10748"/>
        <dbReference type="ChEBI" id="CHEBI:83833"/>
        <dbReference type="ChEBI" id="CHEBI:83834"/>
        <dbReference type="EC" id="5.2.1.8"/>
    </reaction>
</comment>
<comment type="subcellular location">
    <subcellularLocation>
        <location evidence="1">Periplasm</location>
    </subcellularLocation>
    <text evidence="1">Is capable of associating with the outer membrane.</text>
</comment>
<comment type="domain">
    <text evidence="1">The PPIase activity resides only in the second parvulin domain. The N-terminal region and the C-terminal tail are necessary and sufficient for the chaperone activity of SurA. The PPIase activity is dispensable for SurA to function as a chaperone. The N-terminal region and the C-terminal tail are also required for porin recognition.</text>
</comment>
<sequence length="427" mass="47435">MKIWKSILFTTLLSCGAVAAPVELDKVAVIVNDGVILQSDINTAMKTLQANARQSGKSLPSASVLKEQVVEKLIIDTLQGQEADRIGVRIDDNRLNQAIAEIARNNNQSVEELAASVQAEGLSYPEFREQIRKEIAASEARNALVRRRINILPAEVDSLADQLAKETNATVQYKIGHIQLRFTDGQDKSEVEAQAKALVKKLNDGADFTEMAYTYSKGPKALQGGDWGWMRKEEMPTIFADQIKMQNKGSIIGPFRSGVGFHILKIEDVKGLETVAVTEVNARHILIKPTVILSDEGAKKQLNEFVRRIKAGEATFAQLASQYSQDPGSAAQDGELGYQTPDLYVPEFKHQVETLPVGSISEPFKTVHGWHIVEVLDRRQVDRTDSAMKNKAYRILFNRKFNEEAGAWMQELRASAFVEIVDDNNDN</sequence>
<reference key="1">
    <citation type="journal article" date="2003" name="Lancet">
        <title>Genome sequence of Vibrio parahaemolyticus: a pathogenic mechanism distinct from that of V. cholerae.</title>
        <authorList>
            <person name="Makino K."/>
            <person name="Oshima K."/>
            <person name="Kurokawa K."/>
            <person name="Yokoyama K."/>
            <person name="Uda T."/>
            <person name="Tagomori K."/>
            <person name="Iijima Y."/>
            <person name="Najima M."/>
            <person name="Nakano M."/>
            <person name="Yamashita A."/>
            <person name="Kubota Y."/>
            <person name="Kimura S."/>
            <person name="Yasunaga T."/>
            <person name="Honda T."/>
            <person name="Shinagawa H."/>
            <person name="Hattori M."/>
            <person name="Iida T."/>
        </authorList>
    </citation>
    <scope>NUCLEOTIDE SEQUENCE [LARGE SCALE GENOMIC DNA]</scope>
    <source>
        <strain>RIMD 2210633</strain>
    </source>
</reference>
<gene>
    <name evidence="1" type="primary">surA</name>
    <name type="ordered locus">VP0338</name>
</gene>